<keyword id="KW-1185">Reference proteome</keyword>
<keyword id="KW-0687">Ribonucleoprotein</keyword>
<keyword id="KW-0689">Ribosomal protein</keyword>
<gene>
    <name evidence="1" type="primary">rpmI</name>
    <name type="ordered locus">bbp_121</name>
</gene>
<comment type="similarity">
    <text evidence="1">Belongs to the bacterial ribosomal protein bL35 family.</text>
</comment>
<proteinExistence type="inferred from homology"/>
<evidence type="ECO:0000255" key="1">
    <source>
        <dbReference type="HAMAP-Rule" id="MF_00514"/>
    </source>
</evidence>
<evidence type="ECO:0000256" key="2">
    <source>
        <dbReference type="SAM" id="MobiDB-lite"/>
    </source>
</evidence>
<evidence type="ECO:0000305" key="3"/>
<reference key="1">
    <citation type="journal article" date="2003" name="Proc. Natl. Acad. Sci. U.S.A.">
        <title>Reductive genome evolution in Buchnera aphidicola.</title>
        <authorList>
            <person name="van Ham R.C.H.J."/>
            <person name="Kamerbeek J."/>
            <person name="Palacios C."/>
            <person name="Rausell C."/>
            <person name="Abascal F."/>
            <person name="Bastolla U."/>
            <person name="Fernandez J.M."/>
            <person name="Jimenez L."/>
            <person name="Postigo M."/>
            <person name="Silva F.J."/>
            <person name="Tamames J."/>
            <person name="Viguera E."/>
            <person name="Latorre A."/>
            <person name="Valencia A."/>
            <person name="Moran F."/>
            <person name="Moya A."/>
        </authorList>
    </citation>
    <scope>NUCLEOTIDE SEQUENCE [LARGE SCALE GENOMIC DNA]</scope>
    <source>
        <strain>Bp</strain>
    </source>
</reference>
<accession>Q89AV9</accession>
<sequence>MPKIKTLRSAAKRFKKTESGKFKRKQAHLRHILTKKNTHYKRHLRSKVMISKKDIQKVRLFLPYL</sequence>
<protein>
    <recommendedName>
        <fullName evidence="1">Large ribosomal subunit protein bL35</fullName>
    </recommendedName>
    <alternativeName>
        <fullName evidence="3">50S ribosomal protein L35</fullName>
    </alternativeName>
</protein>
<feature type="chain" id="PRO_0000177341" description="Large ribosomal subunit protein bL35">
    <location>
        <begin position="1"/>
        <end position="65"/>
    </location>
</feature>
<feature type="region of interest" description="Disordered" evidence="2">
    <location>
        <begin position="1"/>
        <end position="26"/>
    </location>
</feature>
<organism>
    <name type="scientific">Buchnera aphidicola subsp. Baizongia pistaciae (strain Bp)</name>
    <dbReference type="NCBI Taxonomy" id="224915"/>
    <lineage>
        <taxon>Bacteria</taxon>
        <taxon>Pseudomonadati</taxon>
        <taxon>Pseudomonadota</taxon>
        <taxon>Gammaproteobacteria</taxon>
        <taxon>Enterobacterales</taxon>
        <taxon>Erwiniaceae</taxon>
        <taxon>Buchnera</taxon>
    </lineage>
</organism>
<name>RL35_BUCBP</name>
<dbReference type="EMBL" id="AE016826">
    <property type="protein sequence ID" value="AAO26855.1"/>
    <property type="molecule type" value="Genomic_DNA"/>
</dbReference>
<dbReference type="RefSeq" id="WP_011091256.1">
    <property type="nucleotide sequence ID" value="NC_004545.1"/>
</dbReference>
<dbReference type="SMR" id="Q89AV9"/>
<dbReference type="STRING" id="224915.bbp_121"/>
<dbReference type="KEGG" id="bab:bbp_121"/>
<dbReference type="eggNOG" id="COG0291">
    <property type="taxonomic scope" value="Bacteria"/>
</dbReference>
<dbReference type="HOGENOM" id="CLU_169643_1_1_6"/>
<dbReference type="OrthoDB" id="47476at2"/>
<dbReference type="Proteomes" id="UP000000601">
    <property type="component" value="Chromosome"/>
</dbReference>
<dbReference type="GO" id="GO:0022625">
    <property type="term" value="C:cytosolic large ribosomal subunit"/>
    <property type="evidence" value="ECO:0007669"/>
    <property type="project" value="TreeGrafter"/>
</dbReference>
<dbReference type="GO" id="GO:0003735">
    <property type="term" value="F:structural constituent of ribosome"/>
    <property type="evidence" value="ECO:0007669"/>
    <property type="project" value="InterPro"/>
</dbReference>
<dbReference type="GO" id="GO:0006412">
    <property type="term" value="P:translation"/>
    <property type="evidence" value="ECO:0007669"/>
    <property type="project" value="UniProtKB-UniRule"/>
</dbReference>
<dbReference type="FunFam" id="4.10.410.60:FF:000001">
    <property type="entry name" value="50S ribosomal protein L35"/>
    <property type="match status" value="1"/>
</dbReference>
<dbReference type="Gene3D" id="4.10.410.60">
    <property type="match status" value="1"/>
</dbReference>
<dbReference type="HAMAP" id="MF_00514">
    <property type="entry name" value="Ribosomal_bL35"/>
    <property type="match status" value="1"/>
</dbReference>
<dbReference type="InterPro" id="IPR001706">
    <property type="entry name" value="Ribosomal_bL35"/>
</dbReference>
<dbReference type="InterPro" id="IPR021137">
    <property type="entry name" value="Ribosomal_bL35-like"/>
</dbReference>
<dbReference type="InterPro" id="IPR018265">
    <property type="entry name" value="Ribosomal_bL35_CS"/>
</dbReference>
<dbReference type="InterPro" id="IPR037229">
    <property type="entry name" value="Ribosomal_bL35_sf"/>
</dbReference>
<dbReference type="NCBIfam" id="TIGR00001">
    <property type="entry name" value="rpmI_bact"/>
    <property type="match status" value="1"/>
</dbReference>
<dbReference type="PANTHER" id="PTHR33343">
    <property type="entry name" value="54S RIBOSOMAL PROTEIN BL35M"/>
    <property type="match status" value="1"/>
</dbReference>
<dbReference type="PANTHER" id="PTHR33343:SF1">
    <property type="entry name" value="LARGE RIBOSOMAL SUBUNIT PROTEIN BL35M"/>
    <property type="match status" value="1"/>
</dbReference>
<dbReference type="Pfam" id="PF01632">
    <property type="entry name" value="Ribosomal_L35p"/>
    <property type="match status" value="1"/>
</dbReference>
<dbReference type="PRINTS" id="PR00064">
    <property type="entry name" value="RIBOSOMALL35"/>
</dbReference>
<dbReference type="SUPFAM" id="SSF143034">
    <property type="entry name" value="L35p-like"/>
    <property type="match status" value="1"/>
</dbReference>
<dbReference type="PROSITE" id="PS00936">
    <property type="entry name" value="RIBOSOMAL_L35"/>
    <property type="match status" value="1"/>
</dbReference>